<evidence type="ECO:0000250" key="1"/>
<evidence type="ECO:0000255" key="2">
    <source>
        <dbReference type="PROSITE-ProRule" id="PRU00366"/>
    </source>
</evidence>
<evidence type="ECO:0000256" key="3">
    <source>
        <dbReference type="SAM" id="MobiDB-lite"/>
    </source>
</evidence>
<evidence type="ECO:0000305" key="4"/>
<sequence length="246" mass="25491">MDMAGHEVNSSSSSSGAESSSSSSGRQQYKKRPAGRTKFRETRHPVYRGVRRRGGAGRWVCEVRVPGKRGARLWLGTYVTAEAAARAHDAAMIALRGGAGGGGAACLNFQDSAWLLAVPPAAPSDLAGVRRAATEAVAGFLQRNKTTNGASVAEAMDEATSGVSAPPPLANNAGSSETPGPSSIDGTADTAAGAALDMFELDFFGEMDYDTYYASLAEGLLMEPPPAATALWDNGDEGADIALWSY</sequence>
<proteinExistence type="evidence at transcript level"/>
<comment type="function">
    <text evidence="1">Transcriptional activator that binds specifically to the DNA sequence 5'-[AG]CCGAC-3'. Binding to the C-repeat/DRE element mediates high salinity- and dehydration-inducible transcription (By similarity).</text>
</comment>
<comment type="subcellular location">
    <subcellularLocation>
        <location evidence="4">Nucleus</location>
    </subcellularLocation>
</comment>
<comment type="similarity">
    <text evidence="4">Belongs to the AP2/ERF transcription factor family. ERF subfamily.</text>
</comment>
<dbReference type="EMBL" id="CM000134">
    <property type="protein sequence ID" value="EAZ09799.1"/>
    <property type="molecule type" value="Genomic_DNA"/>
</dbReference>
<dbReference type="SMR" id="A2Z388"/>
<dbReference type="STRING" id="39946.A2Z388"/>
<dbReference type="EnsemblPlants" id="BGIOSGA029416-TA">
    <property type="protein sequence ID" value="BGIOSGA029416-PA"/>
    <property type="gene ID" value="BGIOSGA029416"/>
</dbReference>
<dbReference type="Gramene" id="BGIOSGA029416-TA">
    <property type="protein sequence ID" value="BGIOSGA029416-PA"/>
    <property type="gene ID" value="BGIOSGA029416"/>
</dbReference>
<dbReference type="HOGENOM" id="CLU_063331_1_0_1"/>
<dbReference type="OMA" id="MAGHELN"/>
<dbReference type="Proteomes" id="UP000007015">
    <property type="component" value="Chromosome 9"/>
</dbReference>
<dbReference type="GO" id="GO:0005634">
    <property type="term" value="C:nucleus"/>
    <property type="evidence" value="ECO:0007669"/>
    <property type="project" value="UniProtKB-SubCell"/>
</dbReference>
<dbReference type="GO" id="GO:0003677">
    <property type="term" value="F:DNA binding"/>
    <property type="evidence" value="ECO:0007669"/>
    <property type="project" value="UniProtKB-KW"/>
</dbReference>
<dbReference type="GO" id="GO:0003700">
    <property type="term" value="F:DNA-binding transcription factor activity"/>
    <property type="evidence" value="ECO:0007669"/>
    <property type="project" value="InterPro"/>
</dbReference>
<dbReference type="Gene3D" id="3.30.730.10">
    <property type="entry name" value="AP2/ERF domain"/>
    <property type="match status" value="1"/>
</dbReference>
<dbReference type="InterPro" id="IPR001471">
    <property type="entry name" value="AP2/ERF_dom"/>
</dbReference>
<dbReference type="InterPro" id="IPR036955">
    <property type="entry name" value="AP2/ERF_dom_sf"/>
</dbReference>
<dbReference type="InterPro" id="IPR016177">
    <property type="entry name" value="DNA-bd_dom_sf"/>
</dbReference>
<dbReference type="InterPro" id="IPR045277">
    <property type="entry name" value="DRE1A-I"/>
</dbReference>
<dbReference type="PANTHER" id="PTHR31839">
    <property type="entry name" value="DEHYDRATION-RESPONSIVE ELEMENT-BINDING PROTEIN 1D"/>
    <property type="match status" value="1"/>
</dbReference>
<dbReference type="PANTHER" id="PTHR31839:SF31">
    <property type="entry name" value="DEHYDRATION-RESPONSIVE ELEMENT-BINDING PROTEIN 1H"/>
    <property type="match status" value="1"/>
</dbReference>
<dbReference type="Pfam" id="PF00847">
    <property type="entry name" value="AP2"/>
    <property type="match status" value="1"/>
</dbReference>
<dbReference type="PRINTS" id="PR00367">
    <property type="entry name" value="ETHRSPELEMNT"/>
</dbReference>
<dbReference type="SMART" id="SM00380">
    <property type="entry name" value="AP2"/>
    <property type="match status" value="1"/>
</dbReference>
<dbReference type="SUPFAM" id="SSF54171">
    <property type="entry name" value="DNA-binding domain"/>
    <property type="match status" value="1"/>
</dbReference>
<dbReference type="PROSITE" id="PS51032">
    <property type="entry name" value="AP2_ERF"/>
    <property type="match status" value="1"/>
</dbReference>
<reference key="1">
    <citation type="journal article" date="2005" name="PLoS Biol.">
        <title>The genomes of Oryza sativa: a history of duplications.</title>
        <authorList>
            <person name="Yu J."/>
            <person name="Wang J."/>
            <person name="Lin W."/>
            <person name="Li S."/>
            <person name="Li H."/>
            <person name="Zhou J."/>
            <person name="Ni P."/>
            <person name="Dong W."/>
            <person name="Hu S."/>
            <person name="Zeng C."/>
            <person name="Zhang J."/>
            <person name="Zhang Y."/>
            <person name="Li R."/>
            <person name="Xu Z."/>
            <person name="Li S."/>
            <person name="Li X."/>
            <person name="Zheng H."/>
            <person name="Cong L."/>
            <person name="Lin L."/>
            <person name="Yin J."/>
            <person name="Geng J."/>
            <person name="Li G."/>
            <person name="Shi J."/>
            <person name="Liu J."/>
            <person name="Lv H."/>
            <person name="Li J."/>
            <person name="Wang J."/>
            <person name="Deng Y."/>
            <person name="Ran L."/>
            <person name="Shi X."/>
            <person name="Wang X."/>
            <person name="Wu Q."/>
            <person name="Li C."/>
            <person name="Ren X."/>
            <person name="Wang J."/>
            <person name="Wang X."/>
            <person name="Li D."/>
            <person name="Liu D."/>
            <person name="Zhang X."/>
            <person name="Ji Z."/>
            <person name="Zhao W."/>
            <person name="Sun Y."/>
            <person name="Zhang Z."/>
            <person name="Bao J."/>
            <person name="Han Y."/>
            <person name="Dong L."/>
            <person name="Ji J."/>
            <person name="Chen P."/>
            <person name="Wu S."/>
            <person name="Liu J."/>
            <person name="Xiao Y."/>
            <person name="Bu D."/>
            <person name="Tan J."/>
            <person name="Yang L."/>
            <person name="Ye C."/>
            <person name="Zhang J."/>
            <person name="Xu J."/>
            <person name="Zhou Y."/>
            <person name="Yu Y."/>
            <person name="Zhang B."/>
            <person name="Zhuang S."/>
            <person name="Wei H."/>
            <person name="Liu B."/>
            <person name="Lei M."/>
            <person name="Yu H."/>
            <person name="Li Y."/>
            <person name="Xu H."/>
            <person name="Wei S."/>
            <person name="He X."/>
            <person name="Fang L."/>
            <person name="Zhang Z."/>
            <person name="Zhang Y."/>
            <person name="Huang X."/>
            <person name="Su Z."/>
            <person name="Tong W."/>
            <person name="Li J."/>
            <person name="Tong Z."/>
            <person name="Li S."/>
            <person name="Ye J."/>
            <person name="Wang L."/>
            <person name="Fang L."/>
            <person name="Lei T."/>
            <person name="Chen C.-S."/>
            <person name="Chen H.-C."/>
            <person name="Xu Z."/>
            <person name="Li H."/>
            <person name="Huang H."/>
            <person name="Zhang F."/>
            <person name="Xu H."/>
            <person name="Li N."/>
            <person name="Zhao C."/>
            <person name="Li S."/>
            <person name="Dong L."/>
            <person name="Huang Y."/>
            <person name="Li L."/>
            <person name="Xi Y."/>
            <person name="Qi Q."/>
            <person name="Li W."/>
            <person name="Zhang B."/>
            <person name="Hu W."/>
            <person name="Zhang Y."/>
            <person name="Tian X."/>
            <person name="Jiao Y."/>
            <person name="Liang X."/>
            <person name="Jin J."/>
            <person name="Gao L."/>
            <person name="Zheng W."/>
            <person name="Hao B."/>
            <person name="Liu S.-M."/>
            <person name="Wang W."/>
            <person name="Yuan L."/>
            <person name="Cao M."/>
            <person name="McDermott J."/>
            <person name="Samudrala R."/>
            <person name="Wang J."/>
            <person name="Wong G.K.-S."/>
            <person name="Yang H."/>
        </authorList>
    </citation>
    <scope>NUCLEOTIDE SEQUENCE [LARGE SCALE GENOMIC DNA]</scope>
    <source>
        <strain>cv. 93-11</strain>
    </source>
</reference>
<organism>
    <name type="scientific">Oryza sativa subsp. indica</name>
    <name type="common">Rice</name>
    <dbReference type="NCBI Taxonomy" id="39946"/>
    <lineage>
        <taxon>Eukaryota</taxon>
        <taxon>Viridiplantae</taxon>
        <taxon>Streptophyta</taxon>
        <taxon>Embryophyta</taxon>
        <taxon>Tracheophyta</taxon>
        <taxon>Spermatophyta</taxon>
        <taxon>Magnoliopsida</taxon>
        <taxon>Liliopsida</taxon>
        <taxon>Poales</taxon>
        <taxon>Poaceae</taxon>
        <taxon>BOP clade</taxon>
        <taxon>Oryzoideae</taxon>
        <taxon>Oryzeae</taxon>
        <taxon>Oryzinae</taxon>
        <taxon>Oryza</taxon>
        <taxon>Oryza sativa</taxon>
    </lineage>
</organism>
<accession>A2Z388</accession>
<keyword id="KW-0010">Activator</keyword>
<keyword id="KW-0238">DNA-binding</keyword>
<keyword id="KW-0539">Nucleus</keyword>
<keyword id="KW-1185">Reference proteome</keyword>
<keyword id="KW-0346">Stress response</keyword>
<keyword id="KW-0804">Transcription</keyword>
<keyword id="KW-0805">Transcription regulation</keyword>
<gene>
    <name type="primary">DREB1H</name>
    <name type="synonym">ERF133</name>
    <name type="ORF">OsI_031031</name>
</gene>
<feature type="chain" id="PRO_0000323037" description="Dehydration-responsive element-binding protein 1H">
    <location>
        <begin position="1"/>
        <end position="246"/>
    </location>
</feature>
<feature type="DNA-binding region" description="AP2/ERF" evidence="2">
    <location>
        <begin position="46"/>
        <end position="110"/>
    </location>
</feature>
<feature type="region of interest" description="Disordered" evidence="3">
    <location>
        <begin position="1"/>
        <end position="43"/>
    </location>
</feature>
<feature type="region of interest" description="Disordered" evidence="3">
    <location>
        <begin position="155"/>
        <end position="187"/>
    </location>
</feature>
<feature type="compositionally biased region" description="Low complexity" evidence="3">
    <location>
        <begin position="10"/>
        <end position="24"/>
    </location>
</feature>
<feature type="compositionally biased region" description="Basic residues" evidence="3">
    <location>
        <begin position="28"/>
        <end position="37"/>
    </location>
</feature>
<feature type="compositionally biased region" description="Polar residues" evidence="3">
    <location>
        <begin position="172"/>
        <end position="181"/>
    </location>
</feature>
<protein>
    <recommendedName>
        <fullName>Dehydration-responsive element-binding protein 1H</fullName>
        <shortName>Protein DREB1H</shortName>
    </recommendedName>
</protein>
<name>DRE1H_ORYSI</name>